<organism>
    <name type="scientific">Escherichia coli O17:K52:H18 (strain UMN026 / ExPEC)</name>
    <dbReference type="NCBI Taxonomy" id="585056"/>
    <lineage>
        <taxon>Bacteria</taxon>
        <taxon>Pseudomonadati</taxon>
        <taxon>Pseudomonadota</taxon>
        <taxon>Gammaproteobacteria</taxon>
        <taxon>Enterobacterales</taxon>
        <taxon>Enterobacteriaceae</taxon>
        <taxon>Escherichia</taxon>
    </lineage>
</organism>
<gene>
    <name evidence="1" type="primary">yeiP</name>
    <name type="ordered locus">ECUMN_2508</name>
</gene>
<evidence type="ECO:0000255" key="1">
    <source>
        <dbReference type="HAMAP-Rule" id="MF_00646"/>
    </source>
</evidence>
<evidence type="ECO:0000305" key="2"/>
<comment type="similarity">
    <text evidence="1">Belongs to the elongation factor P family.</text>
</comment>
<comment type="sequence caution" evidence="2">
    <conflict type="erroneous initiation">
        <sequence resource="EMBL-CDS" id="CAR13694"/>
    </conflict>
</comment>
<feature type="chain" id="PRO_0000384912" description="Elongation factor P-like protein">
    <location>
        <begin position="1"/>
        <end position="190"/>
    </location>
</feature>
<protein>
    <recommendedName>
        <fullName evidence="1">Elongation factor P-like protein</fullName>
    </recommendedName>
</protein>
<name>EFPL_ECOLU</name>
<accession>B7N5D5</accession>
<reference key="1">
    <citation type="journal article" date="2009" name="PLoS Genet.">
        <title>Organised genome dynamics in the Escherichia coli species results in highly diverse adaptive paths.</title>
        <authorList>
            <person name="Touchon M."/>
            <person name="Hoede C."/>
            <person name="Tenaillon O."/>
            <person name="Barbe V."/>
            <person name="Baeriswyl S."/>
            <person name="Bidet P."/>
            <person name="Bingen E."/>
            <person name="Bonacorsi S."/>
            <person name="Bouchier C."/>
            <person name="Bouvet O."/>
            <person name="Calteau A."/>
            <person name="Chiapello H."/>
            <person name="Clermont O."/>
            <person name="Cruveiller S."/>
            <person name="Danchin A."/>
            <person name="Diard M."/>
            <person name="Dossat C."/>
            <person name="Karoui M.E."/>
            <person name="Frapy E."/>
            <person name="Garry L."/>
            <person name="Ghigo J.M."/>
            <person name="Gilles A.M."/>
            <person name="Johnson J."/>
            <person name="Le Bouguenec C."/>
            <person name="Lescat M."/>
            <person name="Mangenot S."/>
            <person name="Martinez-Jehanne V."/>
            <person name="Matic I."/>
            <person name="Nassif X."/>
            <person name="Oztas S."/>
            <person name="Petit M.A."/>
            <person name="Pichon C."/>
            <person name="Rouy Z."/>
            <person name="Ruf C.S."/>
            <person name="Schneider D."/>
            <person name="Tourret J."/>
            <person name="Vacherie B."/>
            <person name="Vallenet D."/>
            <person name="Medigue C."/>
            <person name="Rocha E.P.C."/>
            <person name="Denamur E."/>
        </authorList>
    </citation>
    <scope>NUCLEOTIDE SEQUENCE [LARGE SCALE GENOMIC DNA]</scope>
    <source>
        <strain>UMN026 / ExPEC</strain>
    </source>
</reference>
<dbReference type="EMBL" id="CU928163">
    <property type="protein sequence ID" value="CAR13694.1"/>
    <property type="status" value="ALT_INIT"/>
    <property type="molecule type" value="Genomic_DNA"/>
</dbReference>
<dbReference type="RefSeq" id="WP_001136827.1">
    <property type="nucleotide sequence ID" value="NC_011751.1"/>
</dbReference>
<dbReference type="SMR" id="B7N5D5"/>
<dbReference type="STRING" id="585056.ECUMN_2508"/>
<dbReference type="GeneID" id="93775010"/>
<dbReference type="KEGG" id="eum:ECUMN_2508"/>
<dbReference type="PATRIC" id="fig|585056.7.peg.2690"/>
<dbReference type="HOGENOM" id="CLU_074944_2_0_6"/>
<dbReference type="Proteomes" id="UP000007097">
    <property type="component" value="Chromosome"/>
</dbReference>
<dbReference type="GO" id="GO:0005829">
    <property type="term" value="C:cytosol"/>
    <property type="evidence" value="ECO:0007669"/>
    <property type="project" value="UniProtKB-ARBA"/>
</dbReference>
<dbReference type="GO" id="GO:0003746">
    <property type="term" value="F:translation elongation factor activity"/>
    <property type="evidence" value="ECO:0007669"/>
    <property type="project" value="UniProtKB-UniRule"/>
</dbReference>
<dbReference type="GO" id="GO:0043043">
    <property type="term" value="P:peptide biosynthetic process"/>
    <property type="evidence" value="ECO:0007669"/>
    <property type="project" value="InterPro"/>
</dbReference>
<dbReference type="CDD" id="cd04470">
    <property type="entry name" value="S1_EF-P_repeat_1"/>
    <property type="match status" value="1"/>
</dbReference>
<dbReference type="CDD" id="cd05794">
    <property type="entry name" value="S1_EF-P_repeat_2"/>
    <property type="match status" value="1"/>
</dbReference>
<dbReference type="FunFam" id="2.40.50.140:FF:000004">
    <property type="entry name" value="Elongation factor P"/>
    <property type="match status" value="1"/>
</dbReference>
<dbReference type="FunFam" id="2.30.30.30:FF:000011">
    <property type="entry name" value="Elongation factor P-like protein"/>
    <property type="match status" value="1"/>
</dbReference>
<dbReference type="FunFam" id="2.40.50.140:FF:000053">
    <property type="entry name" value="Elongation factor P-like protein"/>
    <property type="match status" value="1"/>
</dbReference>
<dbReference type="Gene3D" id="2.30.30.30">
    <property type="match status" value="1"/>
</dbReference>
<dbReference type="Gene3D" id="2.40.50.140">
    <property type="entry name" value="Nucleic acid-binding proteins"/>
    <property type="match status" value="2"/>
</dbReference>
<dbReference type="HAMAP" id="MF_00646">
    <property type="entry name" value="EFP"/>
    <property type="match status" value="1"/>
</dbReference>
<dbReference type="InterPro" id="IPR015365">
    <property type="entry name" value="Elong-fact-P_C"/>
</dbReference>
<dbReference type="InterPro" id="IPR012340">
    <property type="entry name" value="NA-bd_OB-fold"/>
</dbReference>
<dbReference type="InterPro" id="IPR014722">
    <property type="entry name" value="Rib_uL2_dom2"/>
</dbReference>
<dbReference type="InterPro" id="IPR020599">
    <property type="entry name" value="Transl_elong_fac_P/YeiP"/>
</dbReference>
<dbReference type="InterPro" id="IPR013185">
    <property type="entry name" value="Transl_elong_KOW-like"/>
</dbReference>
<dbReference type="InterPro" id="IPR011897">
    <property type="entry name" value="Transl_elong_p-like_YeiP"/>
</dbReference>
<dbReference type="InterPro" id="IPR001059">
    <property type="entry name" value="Transl_elong_P/YeiP_cen"/>
</dbReference>
<dbReference type="InterPro" id="IPR013852">
    <property type="entry name" value="Transl_elong_P/YeiP_CS"/>
</dbReference>
<dbReference type="InterPro" id="IPR008991">
    <property type="entry name" value="Translation_prot_SH3-like_sf"/>
</dbReference>
<dbReference type="NCBIfam" id="NF001810">
    <property type="entry name" value="PRK00529.1"/>
    <property type="match status" value="1"/>
</dbReference>
<dbReference type="NCBIfam" id="NF003392">
    <property type="entry name" value="PRK04542.1"/>
    <property type="match status" value="1"/>
</dbReference>
<dbReference type="NCBIfam" id="TIGR02178">
    <property type="entry name" value="yeiP"/>
    <property type="match status" value="1"/>
</dbReference>
<dbReference type="PANTHER" id="PTHR30053">
    <property type="entry name" value="ELONGATION FACTOR P"/>
    <property type="match status" value="1"/>
</dbReference>
<dbReference type="PANTHER" id="PTHR30053:SF14">
    <property type="entry name" value="TRANSLATION ELONGATION FACTOR KOW-LIKE DOMAIN-CONTAINING PROTEIN"/>
    <property type="match status" value="1"/>
</dbReference>
<dbReference type="Pfam" id="PF01132">
    <property type="entry name" value="EFP"/>
    <property type="match status" value="1"/>
</dbReference>
<dbReference type="Pfam" id="PF08207">
    <property type="entry name" value="EFP_N"/>
    <property type="match status" value="1"/>
</dbReference>
<dbReference type="Pfam" id="PF09285">
    <property type="entry name" value="Elong-fact-P_C"/>
    <property type="match status" value="1"/>
</dbReference>
<dbReference type="PIRSF" id="PIRSF005901">
    <property type="entry name" value="EF-P"/>
    <property type="match status" value="1"/>
</dbReference>
<dbReference type="SMART" id="SM01185">
    <property type="entry name" value="EFP"/>
    <property type="match status" value="1"/>
</dbReference>
<dbReference type="SMART" id="SM00841">
    <property type="entry name" value="Elong-fact-P_C"/>
    <property type="match status" value="1"/>
</dbReference>
<dbReference type="SUPFAM" id="SSF50249">
    <property type="entry name" value="Nucleic acid-binding proteins"/>
    <property type="match status" value="2"/>
</dbReference>
<dbReference type="SUPFAM" id="SSF50104">
    <property type="entry name" value="Translation proteins SH3-like domain"/>
    <property type="match status" value="1"/>
</dbReference>
<dbReference type="PROSITE" id="PS01275">
    <property type="entry name" value="EFP"/>
    <property type="match status" value="1"/>
</dbReference>
<sequence length="190" mass="21533">MPRANEIKKGMVLNYNGKLLLVKDIDIQSPTARGAATLYKMRFSDVRTGLKVEERFKGDDIVDTVTLTRRYVDFSYVDGNEYVFMDKEDYTPYTFTKDQIEEELLFMPEGGMPDMQVLTWDGQLLALELPQTVDLEIVETAPGIKGASASARNKPATLSTGLVIQVPEYLSPGEKIRIHIEERRYMGRAD</sequence>
<proteinExistence type="inferred from homology"/>